<sequence>MRTWLLAVLLLSVIAVTYGQGECDSDPCENGSTCQEGEGSYICQCPMGYDGQNCDRFTGSNCGYNVFDANGMIDSPNYPAMYNNRADCLYLVRITKARSITFTIEDFMTEVFKDVVEYGIGPEADFNQALGSFEGNLTQDDVIPAPFTVQGDQAWFIFSTDRNIVNRGFRITFSSDGDDCDPNLCQNGAACTDLVNDYACTCPPGFTGRNCEIDIDECASDPCQNGGACVDGVNGYVCNCVPGFDGDECENNINECASSPCLNGGICVDGVNMFECTCLAGFTGVRCEVNIDECASAPCQNGGICIDGINGYTCSCPLGFSGDNCENNDDECSSIPCLNGGTCVDLVNAYMCVCAPGWTGPTCADNIDECASAPCQNGGVCIDGVNGYMCDCQPGYTGTHCETDIDECARPPCQNGGDCVDGVNGYVCICAPGFDGLNCENNIDECASRPCQNGAVCVDGVNGFVCTCSAGYTGVLCETDINECASMPCLNGGVCTDLVNGYICTCAAGFEGTNCETDTDECASFPCQNGATCTDQVNGYVCTCVPGYTGVLCETDINECASFPCLNGGTCNDQVNGYVCVCAQDTSVSTCETDRDECASAPCLNGGACMDVVNGFVCTCLPGWEGTNCEINTDECASSPCMNGGLCVDQVNSYVCFCLPGFTGIHCGTEIDECASSPCLNGGQCIDRVDSYECVCAAGYTAVRCQINIDECASAPCQNGGVCVDGVNGYVCNCAPGYTGDNCETEIDECASMPCLNGGACIEMVNGYTCQCVAGYTGVICETDIDECASAPCQNGGVCTDTINGYICACVPGFTGSNCETNIDECASDPCLNGGICVDGVNGFVCQCPPNYSGTYCEISLDACRSMPCQNGATCVNVGADYVCECVPGYAGQNCEIDINECASLPCQNGGLCIDGIAGYTCQCRLGYIGVNCEEVGFCDLEGMWYNECNDQVTITKTSTGMMLGDYMTYNERALGYAAPTVVVGYASNNYDFPSFGFTVVRDNGQSTTSWTGQCHLCDGEEVLYTTWINTNMVSTCQDIKKSNMVGQDKWTRYEQSIAPQPDA</sequence>
<organism>
    <name type="scientific">Strongylocentrotus purpuratus</name>
    <name type="common">Purple sea urchin</name>
    <dbReference type="NCBI Taxonomy" id="7668"/>
    <lineage>
        <taxon>Eukaryota</taxon>
        <taxon>Metazoa</taxon>
        <taxon>Echinodermata</taxon>
        <taxon>Eleutherozoa</taxon>
        <taxon>Echinozoa</taxon>
        <taxon>Echinoidea</taxon>
        <taxon>Euechinoidea</taxon>
        <taxon>Echinacea</taxon>
        <taxon>Camarodonta</taxon>
        <taxon>Echinidea</taxon>
        <taxon>Strongylocentrotidae</taxon>
        <taxon>Strongylocentrotus</taxon>
    </lineage>
</organism>
<feature type="signal peptide" evidence="2">
    <location>
        <begin position="1"/>
        <end position="19"/>
    </location>
</feature>
<feature type="chain" id="PRO_0000002732" description="Fibropellin-1">
    <location>
        <begin position="20"/>
        <end position="1064"/>
    </location>
</feature>
<feature type="domain" description="EGF-like 1" evidence="4">
    <location>
        <begin position="20"/>
        <end position="55"/>
    </location>
</feature>
<feature type="domain" description="CUB" evidence="3">
    <location>
        <begin position="62"/>
        <end position="175"/>
    </location>
</feature>
<feature type="domain" description="EGF-like 2; calcium-binding" evidence="4">
    <location>
        <begin position="176"/>
        <end position="212"/>
    </location>
</feature>
<feature type="domain" description="EGF-like 3; calcium-binding" evidence="4">
    <location>
        <begin position="214"/>
        <end position="250"/>
    </location>
</feature>
<feature type="domain" description="EGF-like 4; calcium-binding" evidence="4">
    <location>
        <begin position="252"/>
        <end position="288"/>
    </location>
</feature>
<feature type="domain" description="EGF-like 5; calcium-binding" evidence="4">
    <location>
        <begin position="290"/>
        <end position="326"/>
    </location>
</feature>
<feature type="domain" description="EGF-like 6; calcium-binding" evidence="4">
    <location>
        <begin position="328"/>
        <end position="364"/>
    </location>
</feature>
<feature type="domain" description="EGF-like 7; calcium-binding" evidence="4">
    <location>
        <begin position="366"/>
        <end position="402"/>
    </location>
</feature>
<feature type="domain" description="EGF-like 8; calcium-binding" evidence="4">
    <location>
        <begin position="404"/>
        <end position="440"/>
    </location>
</feature>
<feature type="domain" description="EGF-like 9; calcium-binding" evidence="4">
    <location>
        <begin position="442"/>
        <end position="478"/>
    </location>
</feature>
<feature type="domain" description="EGF-like 10; calcium-binding" evidence="4">
    <location>
        <begin position="480"/>
        <end position="516"/>
    </location>
</feature>
<feature type="domain" description="EGF-like 11; calcium-binding" evidence="4">
    <location>
        <begin position="518"/>
        <end position="554"/>
    </location>
</feature>
<feature type="domain" description="EGF-like 12; calcium-binding" evidence="4">
    <location>
        <begin position="556"/>
        <end position="592"/>
    </location>
</feature>
<feature type="domain" description="EGF-like 13; calcium-binding" evidence="4">
    <location>
        <begin position="594"/>
        <end position="630"/>
    </location>
</feature>
<feature type="domain" description="EGF-like 14; calcium-binding" evidence="4">
    <location>
        <begin position="632"/>
        <end position="668"/>
    </location>
</feature>
<feature type="domain" description="EGF-like 15; calcium-binding" evidence="4">
    <location>
        <begin position="670"/>
        <end position="706"/>
    </location>
</feature>
<feature type="domain" description="EGF-like 16; calcium-binding" evidence="4">
    <location>
        <begin position="708"/>
        <end position="744"/>
    </location>
</feature>
<feature type="domain" description="EGF-like 17; calcium-binding" evidence="4">
    <location>
        <begin position="746"/>
        <end position="782"/>
    </location>
</feature>
<feature type="domain" description="EGF-like 18; calcium-binding" evidence="4">
    <location>
        <begin position="784"/>
        <end position="820"/>
    </location>
</feature>
<feature type="domain" description="EGF-like 19; calcium-binding" evidence="4">
    <location>
        <begin position="822"/>
        <end position="858"/>
    </location>
</feature>
<feature type="domain" description="EGF-like 20" evidence="4">
    <location>
        <begin position="860"/>
        <end position="896"/>
    </location>
</feature>
<feature type="domain" description="EGF-like 21; calcium-binding" evidence="4">
    <location>
        <begin position="898"/>
        <end position="934"/>
    </location>
</feature>
<feature type="domain" description="Avidin-like" evidence="5">
    <location>
        <begin position="937"/>
        <end position="1056"/>
    </location>
</feature>
<feature type="glycosylation site" description="N-linked (GlcNAc...) asparagine" evidence="2">
    <location>
        <position position="30"/>
    </location>
</feature>
<feature type="glycosylation site" description="N-linked (GlcNAc...) asparagine" evidence="2">
    <location>
        <position position="136"/>
    </location>
</feature>
<feature type="glycosylation site" description="N-linked (GlcNAc...) asparagine" evidence="2">
    <location>
        <position position="851"/>
    </location>
</feature>
<feature type="disulfide bond" evidence="1">
    <location>
        <begin position="23"/>
        <end position="34"/>
    </location>
</feature>
<feature type="disulfide bond" evidence="1">
    <location>
        <begin position="28"/>
        <end position="43"/>
    </location>
</feature>
<feature type="disulfide bond" evidence="1">
    <location>
        <begin position="45"/>
        <end position="54"/>
    </location>
</feature>
<feature type="disulfide bond" evidence="1">
    <location>
        <begin position="62"/>
        <end position="88"/>
    </location>
</feature>
<feature type="disulfide bond" evidence="1">
    <location>
        <begin position="180"/>
        <end position="191"/>
    </location>
</feature>
<feature type="disulfide bond" evidence="1">
    <location>
        <begin position="185"/>
        <end position="200"/>
    </location>
</feature>
<feature type="disulfide bond" evidence="1">
    <location>
        <begin position="202"/>
        <end position="211"/>
    </location>
</feature>
<feature type="disulfide bond" evidence="1">
    <location>
        <begin position="218"/>
        <end position="229"/>
    </location>
</feature>
<feature type="disulfide bond" evidence="1">
    <location>
        <begin position="223"/>
        <end position="238"/>
    </location>
</feature>
<feature type="disulfide bond" evidence="1">
    <location>
        <begin position="240"/>
        <end position="249"/>
    </location>
</feature>
<feature type="disulfide bond" evidence="1">
    <location>
        <begin position="256"/>
        <end position="267"/>
    </location>
</feature>
<feature type="disulfide bond" evidence="1">
    <location>
        <begin position="261"/>
        <end position="276"/>
    </location>
</feature>
<feature type="disulfide bond" evidence="1">
    <location>
        <begin position="278"/>
        <end position="287"/>
    </location>
</feature>
<feature type="disulfide bond" evidence="1">
    <location>
        <begin position="294"/>
        <end position="305"/>
    </location>
</feature>
<feature type="disulfide bond" evidence="1">
    <location>
        <begin position="299"/>
        <end position="314"/>
    </location>
</feature>
<feature type="disulfide bond" evidence="1">
    <location>
        <begin position="316"/>
        <end position="325"/>
    </location>
</feature>
<feature type="disulfide bond" evidence="1">
    <location>
        <begin position="332"/>
        <end position="343"/>
    </location>
</feature>
<feature type="disulfide bond" evidence="1">
    <location>
        <begin position="337"/>
        <end position="352"/>
    </location>
</feature>
<feature type="disulfide bond" evidence="1">
    <location>
        <begin position="354"/>
        <end position="363"/>
    </location>
</feature>
<feature type="disulfide bond" evidence="1">
    <location>
        <begin position="370"/>
        <end position="381"/>
    </location>
</feature>
<feature type="disulfide bond" evidence="1">
    <location>
        <begin position="375"/>
        <end position="390"/>
    </location>
</feature>
<feature type="disulfide bond" evidence="1">
    <location>
        <begin position="392"/>
        <end position="401"/>
    </location>
</feature>
<feature type="disulfide bond" evidence="1">
    <location>
        <begin position="408"/>
        <end position="419"/>
    </location>
</feature>
<feature type="disulfide bond" evidence="1">
    <location>
        <begin position="413"/>
        <end position="428"/>
    </location>
</feature>
<feature type="disulfide bond" evidence="1">
    <location>
        <begin position="430"/>
        <end position="439"/>
    </location>
</feature>
<feature type="disulfide bond" evidence="1">
    <location>
        <begin position="446"/>
        <end position="457"/>
    </location>
</feature>
<feature type="disulfide bond" evidence="1">
    <location>
        <begin position="451"/>
        <end position="466"/>
    </location>
</feature>
<feature type="disulfide bond" evidence="1">
    <location>
        <begin position="468"/>
        <end position="477"/>
    </location>
</feature>
<feature type="disulfide bond" evidence="1">
    <location>
        <begin position="484"/>
        <end position="495"/>
    </location>
</feature>
<feature type="disulfide bond" evidence="1">
    <location>
        <begin position="489"/>
        <end position="504"/>
    </location>
</feature>
<feature type="disulfide bond" evidence="1">
    <location>
        <begin position="506"/>
        <end position="515"/>
    </location>
</feature>
<feature type="disulfide bond" evidence="1">
    <location>
        <begin position="522"/>
        <end position="533"/>
    </location>
</feature>
<feature type="disulfide bond" evidence="1">
    <location>
        <begin position="527"/>
        <end position="542"/>
    </location>
</feature>
<feature type="disulfide bond" evidence="1">
    <location>
        <begin position="544"/>
        <end position="553"/>
    </location>
</feature>
<feature type="disulfide bond" evidence="1">
    <location>
        <begin position="560"/>
        <end position="571"/>
    </location>
</feature>
<feature type="disulfide bond" evidence="1">
    <location>
        <begin position="565"/>
        <end position="580"/>
    </location>
</feature>
<feature type="disulfide bond" evidence="1">
    <location>
        <begin position="582"/>
        <end position="591"/>
    </location>
</feature>
<feature type="disulfide bond" evidence="1">
    <location>
        <begin position="598"/>
        <end position="609"/>
    </location>
</feature>
<feature type="disulfide bond" evidence="1">
    <location>
        <begin position="603"/>
        <end position="618"/>
    </location>
</feature>
<feature type="disulfide bond" evidence="1">
    <location>
        <begin position="620"/>
        <end position="629"/>
    </location>
</feature>
<feature type="disulfide bond" evidence="1">
    <location>
        <begin position="636"/>
        <end position="647"/>
    </location>
</feature>
<feature type="disulfide bond" evidence="1">
    <location>
        <begin position="641"/>
        <end position="656"/>
    </location>
</feature>
<feature type="disulfide bond" evidence="1">
    <location>
        <begin position="658"/>
        <end position="667"/>
    </location>
</feature>
<feature type="disulfide bond" evidence="1">
    <location>
        <begin position="674"/>
        <end position="685"/>
    </location>
</feature>
<feature type="disulfide bond" evidence="1">
    <location>
        <begin position="679"/>
        <end position="694"/>
    </location>
</feature>
<feature type="disulfide bond" evidence="1">
    <location>
        <begin position="696"/>
        <end position="705"/>
    </location>
</feature>
<feature type="disulfide bond" evidence="1">
    <location>
        <begin position="712"/>
        <end position="723"/>
    </location>
</feature>
<feature type="disulfide bond" evidence="1">
    <location>
        <begin position="717"/>
        <end position="732"/>
    </location>
</feature>
<feature type="disulfide bond" evidence="1">
    <location>
        <begin position="734"/>
        <end position="743"/>
    </location>
</feature>
<feature type="disulfide bond" evidence="1">
    <location>
        <begin position="750"/>
        <end position="761"/>
    </location>
</feature>
<feature type="disulfide bond" evidence="1">
    <location>
        <begin position="755"/>
        <end position="770"/>
    </location>
</feature>
<feature type="disulfide bond" evidence="1">
    <location>
        <begin position="772"/>
        <end position="781"/>
    </location>
</feature>
<feature type="disulfide bond" evidence="1">
    <location>
        <begin position="788"/>
        <end position="799"/>
    </location>
</feature>
<feature type="disulfide bond" evidence="1">
    <location>
        <begin position="793"/>
        <end position="808"/>
    </location>
</feature>
<feature type="disulfide bond" evidence="1">
    <location>
        <begin position="810"/>
        <end position="819"/>
    </location>
</feature>
<feature type="disulfide bond" evidence="1">
    <location>
        <begin position="826"/>
        <end position="837"/>
    </location>
</feature>
<feature type="disulfide bond" evidence="1">
    <location>
        <begin position="831"/>
        <end position="846"/>
    </location>
</feature>
<feature type="disulfide bond" evidence="1">
    <location>
        <begin position="848"/>
        <end position="857"/>
    </location>
</feature>
<feature type="disulfide bond" evidence="1">
    <location>
        <begin position="864"/>
        <end position="875"/>
    </location>
</feature>
<feature type="disulfide bond" evidence="1">
    <location>
        <begin position="869"/>
        <end position="884"/>
    </location>
</feature>
<feature type="disulfide bond" evidence="1">
    <location>
        <begin position="886"/>
        <end position="895"/>
    </location>
</feature>
<feature type="disulfide bond" evidence="1">
    <location>
        <begin position="902"/>
        <end position="913"/>
    </location>
</feature>
<feature type="disulfide bond" evidence="1">
    <location>
        <begin position="907"/>
        <end position="922"/>
    </location>
</feature>
<feature type="disulfide bond" evidence="1">
    <location>
        <begin position="924"/>
        <end position="933"/>
    </location>
</feature>
<feature type="disulfide bond" evidence="5">
    <location>
        <begin position="939"/>
        <end position="1015"/>
    </location>
</feature>
<feature type="splice variant" id="VSP_000451" description="In isoform Ib." evidence="7">
    <location>
        <begin position="477"/>
        <end position="780"/>
    </location>
</feature>
<feature type="sequence conflict" description="In Ref. 2; AAA30050." evidence="7" ref="2">
    <original>L</original>
    <variation>S</variation>
    <location>
        <position position="279"/>
    </location>
</feature>
<reference key="1">
    <citation type="journal article" date="1989" name="J. Mol. Evol.">
        <title>Structural analysis of the uEGF gene in the sea urchin strongylocentrotus purpuratus reveals more similarity to vertebrate than to invertebrate genes with EGF-like repeats.</title>
        <authorList>
            <person name="Delgadillo-Reynoso M.G."/>
            <person name="Rollo D.R."/>
            <person name="Hursh D.A."/>
            <person name="Raff R.A."/>
        </authorList>
    </citation>
    <scope>NUCLEOTIDE SEQUENCE [GENOMIC DNA]</scope>
    <scope>ALTERNATIVE SPLICING</scope>
</reference>
<reference key="2">
    <citation type="journal article" date="1987" name="Science">
        <title>A sea urchin gene encodes a polypeptide homologous to epidermal growth factor.</title>
        <authorList>
            <person name="Hursh D.A."/>
            <person name="Andrews M.E."/>
            <person name="Raff R.A."/>
        </authorList>
    </citation>
    <scope>NUCLEOTIDE SEQUENCE [MRNA] OF 279-476 AND 781-1064</scope>
</reference>
<reference key="3">
    <citation type="journal article" date="1989" name="FASEB J.">
        <title>Avidin-like domain in an epidermal growth factor homolog from a sea urchin.</title>
        <authorList>
            <person name="Hunt L.T."/>
            <person name="Barker W.C."/>
        </authorList>
    </citation>
    <scope>DOMAIN AVIDIN-LIKE</scope>
</reference>
<reference key="4">
    <citation type="journal article" date="1991" name="Dev. Biol.">
        <title>Fibropellins, products of an EGF repeat-containing gene, form a unique extracellular matrix structure that surrounds the sea urchin embryo.</title>
        <authorList>
            <person name="Bisgrove B.W."/>
            <person name="Andrews M.E."/>
            <person name="Raff R.A."/>
        </authorList>
    </citation>
    <scope>CHARACTERIZATION</scope>
</reference>
<reference key="5">
    <citation type="journal article" date="2005" name="Protein Sci.">
        <title>An avidin-like domain that does not bind biotin is adopted for oligomerization by the extracellular mosaic protein fibropellin.</title>
        <authorList>
            <person name="Yanai I."/>
            <person name="Yu Y."/>
            <person name="Zhu X."/>
            <person name="Cantor C.R."/>
            <person name="Weng Z."/>
        </authorList>
    </citation>
    <scope>SUBUNIT</scope>
    <scope>ABSENCE OF BINDING TO AVIDIN</scope>
</reference>
<evidence type="ECO:0000250" key="1"/>
<evidence type="ECO:0000255" key="2"/>
<evidence type="ECO:0000255" key="3">
    <source>
        <dbReference type="PROSITE-ProRule" id="PRU00059"/>
    </source>
</evidence>
<evidence type="ECO:0000255" key="4">
    <source>
        <dbReference type="PROSITE-ProRule" id="PRU00076"/>
    </source>
</evidence>
<evidence type="ECO:0000255" key="5">
    <source>
        <dbReference type="PROSITE-ProRule" id="PRU00656"/>
    </source>
</evidence>
<evidence type="ECO:0000269" key="6">
    <source>
    </source>
</evidence>
<evidence type="ECO:0000305" key="7"/>
<gene>
    <name type="primary">EGF1</name>
</gene>
<dbReference type="EMBL" id="L08692">
    <property type="protein sequence ID" value="AAA62164.1"/>
    <property type="molecule type" value="Genomic_DNA"/>
</dbReference>
<dbReference type="EMBL" id="L08692">
    <property type="protein sequence ID" value="AAA62163.1"/>
    <property type="molecule type" value="Genomic_DNA"/>
</dbReference>
<dbReference type="EMBL" id="X17530">
    <property type="protein sequence ID" value="CAA35571.1"/>
    <property type="molecule type" value="mRNA"/>
</dbReference>
<dbReference type="EMBL" id="M17421">
    <property type="protein sequence ID" value="AAA30050.1"/>
    <property type="molecule type" value="mRNA"/>
</dbReference>
<dbReference type="EMBL" id="X17533">
    <property type="protein sequence ID" value="CAA35573.1"/>
    <property type="molecule type" value="mRNA"/>
</dbReference>
<dbReference type="PIR" id="A40136">
    <property type="entry name" value="A40136"/>
</dbReference>
<dbReference type="RefSeq" id="NP_001229629.1">
    <molecule id="P10079-1"/>
    <property type="nucleotide sequence ID" value="NM_001242700.1"/>
</dbReference>
<dbReference type="SMR" id="P10079"/>
<dbReference type="STRING" id="7668.P10079"/>
<dbReference type="TCDB" id="9.B.87.1.28">
    <property type="family name" value="the selenoprotein p receptor (selp-receptor) family"/>
</dbReference>
<dbReference type="GlyCosmos" id="P10079">
    <property type="glycosylation" value="3 sites, No reported glycans"/>
</dbReference>
<dbReference type="EnsemblMetazoa" id="NM_001242700">
    <molecule id="P10079-1"/>
    <property type="protein sequence ID" value="NP_001229629"/>
    <property type="gene ID" value="GeneID_373313"/>
</dbReference>
<dbReference type="GeneID" id="373313"/>
<dbReference type="KEGG" id="spu:373313"/>
<dbReference type="CTD" id="373313"/>
<dbReference type="eggNOG" id="KOG1217">
    <property type="taxonomic scope" value="Eukaryota"/>
</dbReference>
<dbReference type="InParanoid" id="P10079"/>
<dbReference type="OrthoDB" id="283575at2759"/>
<dbReference type="Proteomes" id="UP000007110">
    <property type="component" value="Unassembled WGS sequence"/>
</dbReference>
<dbReference type="GO" id="GO:0032579">
    <property type="term" value="C:apical lamina of hyaline layer"/>
    <property type="evidence" value="ECO:0007669"/>
    <property type="project" value="UniProtKB-SubCell"/>
</dbReference>
<dbReference type="GO" id="GO:0031410">
    <property type="term" value="C:cytoplasmic vesicle"/>
    <property type="evidence" value="ECO:0007669"/>
    <property type="project" value="UniProtKB-KW"/>
</dbReference>
<dbReference type="GO" id="GO:0005576">
    <property type="term" value="C:extracellular region"/>
    <property type="evidence" value="ECO:0007669"/>
    <property type="project" value="UniProtKB-SubCell"/>
</dbReference>
<dbReference type="GO" id="GO:0009374">
    <property type="term" value="F:biotin binding"/>
    <property type="evidence" value="ECO:0007669"/>
    <property type="project" value="InterPro"/>
</dbReference>
<dbReference type="GO" id="GO:0005509">
    <property type="term" value="F:calcium ion binding"/>
    <property type="evidence" value="ECO:0007669"/>
    <property type="project" value="InterPro"/>
</dbReference>
<dbReference type="CDD" id="cd00041">
    <property type="entry name" value="CUB"/>
    <property type="match status" value="1"/>
</dbReference>
<dbReference type="CDD" id="cd00054">
    <property type="entry name" value="EGF_CA"/>
    <property type="match status" value="21"/>
</dbReference>
<dbReference type="FunFam" id="2.10.25.10:FF:000420">
    <property type="entry name" value="Coagulation factor VII"/>
    <property type="match status" value="1"/>
</dbReference>
<dbReference type="FunFam" id="2.10.25.10:FF:000123">
    <property type="entry name" value="Crumbs homolog 1 (Drosophila)"/>
    <property type="match status" value="1"/>
</dbReference>
<dbReference type="FunFam" id="2.10.25.10:FF:000012">
    <property type="entry name" value="Delta-like protein"/>
    <property type="match status" value="1"/>
</dbReference>
<dbReference type="FunFam" id="2.10.25.10:FF:000004">
    <property type="entry name" value="Neurogenic locus notch 1"/>
    <property type="match status" value="2"/>
</dbReference>
<dbReference type="FunFam" id="2.10.25.10:FF:000537">
    <property type="entry name" value="Notch 3"/>
    <property type="match status" value="1"/>
</dbReference>
<dbReference type="FunFam" id="2.10.25.10:FF:000434">
    <property type="entry name" value="Predicted protein"/>
    <property type="match status" value="1"/>
</dbReference>
<dbReference type="FunFam" id="2.10.25.10:FF:000143">
    <property type="entry name" value="Protein crumbs 1"/>
    <property type="match status" value="4"/>
</dbReference>
<dbReference type="FunFam" id="2.10.25.10:FF:000122">
    <property type="entry name" value="Protein crumbs homolog 2"/>
    <property type="match status" value="4"/>
</dbReference>
<dbReference type="FunFam" id="2.10.25.10:FF:000045">
    <property type="entry name" value="Slit guidance ligand 2"/>
    <property type="match status" value="1"/>
</dbReference>
<dbReference type="FunFam" id="2.10.25.10:FF:000784">
    <property type="entry name" value="Uncharacterized protein"/>
    <property type="match status" value="3"/>
</dbReference>
<dbReference type="FunFam" id="2.10.25.10:FF:001107">
    <property type="entry name" value="Uncharacterized protein"/>
    <property type="match status" value="1"/>
</dbReference>
<dbReference type="FunFam" id="2.10.25.10:FF:000006">
    <property type="entry name" value="Versican core protein-like isoform 1"/>
    <property type="match status" value="1"/>
</dbReference>
<dbReference type="Gene3D" id="2.40.128.30">
    <property type="entry name" value="Avidin-like"/>
    <property type="match status" value="1"/>
</dbReference>
<dbReference type="Gene3D" id="2.10.25.10">
    <property type="entry name" value="Laminin"/>
    <property type="match status" value="21"/>
</dbReference>
<dbReference type="Gene3D" id="2.60.120.290">
    <property type="entry name" value="Spermadhesin, CUB domain"/>
    <property type="match status" value="1"/>
</dbReference>
<dbReference type="InterPro" id="IPR005469">
    <property type="entry name" value="Avidin"/>
</dbReference>
<dbReference type="InterPro" id="IPR017889">
    <property type="entry name" value="Avidin-like_CS"/>
</dbReference>
<dbReference type="InterPro" id="IPR036896">
    <property type="entry name" value="Avidin-like_sf"/>
</dbReference>
<dbReference type="InterPro" id="IPR005468">
    <property type="entry name" value="Avidin/str"/>
</dbReference>
<dbReference type="InterPro" id="IPR000859">
    <property type="entry name" value="CUB_dom"/>
</dbReference>
<dbReference type="InterPro" id="IPR001881">
    <property type="entry name" value="EGF-like_Ca-bd_dom"/>
</dbReference>
<dbReference type="InterPro" id="IPR013032">
    <property type="entry name" value="EGF-like_CS"/>
</dbReference>
<dbReference type="InterPro" id="IPR000742">
    <property type="entry name" value="EGF-like_dom"/>
</dbReference>
<dbReference type="InterPro" id="IPR000152">
    <property type="entry name" value="EGF-type_Asp/Asn_hydroxyl_site"/>
</dbReference>
<dbReference type="InterPro" id="IPR018097">
    <property type="entry name" value="EGF_Ca-bd_CS"/>
</dbReference>
<dbReference type="InterPro" id="IPR009030">
    <property type="entry name" value="Growth_fac_rcpt_cys_sf"/>
</dbReference>
<dbReference type="InterPro" id="IPR051830">
    <property type="entry name" value="NOTCH_homolog"/>
</dbReference>
<dbReference type="InterPro" id="IPR035914">
    <property type="entry name" value="Sperma_CUB_dom_sf"/>
</dbReference>
<dbReference type="PANTHER" id="PTHR24033:SF224">
    <property type="entry name" value="C-TYPE LECTIN"/>
    <property type="match status" value="1"/>
</dbReference>
<dbReference type="PANTHER" id="PTHR24033">
    <property type="entry name" value="EGF-LIKE DOMAIN-CONTAINING PROTEIN"/>
    <property type="match status" value="1"/>
</dbReference>
<dbReference type="Pfam" id="PF01382">
    <property type="entry name" value="Avidin"/>
    <property type="match status" value="1"/>
</dbReference>
<dbReference type="Pfam" id="PF00431">
    <property type="entry name" value="CUB"/>
    <property type="match status" value="1"/>
</dbReference>
<dbReference type="Pfam" id="PF00008">
    <property type="entry name" value="EGF"/>
    <property type="match status" value="18"/>
</dbReference>
<dbReference type="Pfam" id="PF12661">
    <property type="entry name" value="hEGF"/>
    <property type="match status" value="3"/>
</dbReference>
<dbReference type="PRINTS" id="PR00709">
    <property type="entry name" value="AVIDIN"/>
</dbReference>
<dbReference type="PRINTS" id="PR00010">
    <property type="entry name" value="EGFBLOOD"/>
</dbReference>
<dbReference type="SMART" id="SM00042">
    <property type="entry name" value="CUB"/>
    <property type="match status" value="1"/>
</dbReference>
<dbReference type="SMART" id="SM00181">
    <property type="entry name" value="EGF"/>
    <property type="match status" value="21"/>
</dbReference>
<dbReference type="SMART" id="SM00179">
    <property type="entry name" value="EGF_CA"/>
    <property type="match status" value="21"/>
</dbReference>
<dbReference type="SUPFAM" id="SSF50876">
    <property type="entry name" value="Avidin/streptavidin"/>
    <property type="match status" value="1"/>
</dbReference>
<dbReference type="SUPFAM" id="SSF57196">
    <property type="entry name" value="EGF/Laminin"/>
    <property type="match status" value="6"/>
</dbReference>
<dbReference type="SUPFAM" id="SSF57184">
    <property type="entry name" value="Growth factor receptor domain"/>
    <property type="match status" value="5"/>
</dbReference>
<dbReference type="SUPFAM" id="SSF49854">
    <property type="entry name" value="Spermadhesin, CUB domain"/>
    <property type="match status" value="1"/>
</dbReference>
<dbReference type="PROSITE" id="PS00010">
    <property type="entry name" value="ASX_HYDROXYL"/>
    <property type="match status" value="19"/>
</dbReference>
<dbReference type="PROSITE" id="PS00577">
    <property type="entry name" value="AVIDIN_1"/>
    <property type="match status" value="1"/>
</dbReference>
<dbReference type="PROSITE" id="PS51326">
    <property type="entry name" value="AVIDIN_2"/>
    <property type="match status" value="1"/>
</dbReference>
<dbReference type="PROSITE" id="PS01180">
    <property type="entry name" value="CUB"/>
    <property type="match status" value="1"/>
</dbReference>
<dbReference type="PROSITE" id="PS00022">
    <property type="entry name" value="EGF_1"/>
    <property type="match status" value="19"/>
</dbReference>
<dbReference type="PROSITE" id="PS01186">
    <property type="entry name" value="EGF_2"/>
    <property type="match status" value="19"/>
</dbReference>
<dbReference type="PROSITE" id="PS50026">
    <property type="entry name" value="EGF_3"/>
    <property type="match status" value="21"/>
</dbReference>
<dbReference type="PROSITE" id="PS01187">
    <property type="entry name" value="EGF_CA"/>
    <property type="match status" value="18"/>
</dbReference>
<comment type="function">
    <text>Forms the apical lamina, a component of the extracellular matrix.</text>
</comment>
<comment type="subunit">
    <text evidence="5 6">Homotetramer.</text>
</comment>
<comment type="subcellular location">
    <subcellularLocation>
        <location>Secreted</location>
        <location>Extracellular space</location>
    </subcellularLocation>
    <subcellularLocation>
        <location>Cytoplasmic vesicle</location>
    </subcellularLocation>
    <subcellularLocation>
        <location>Secreted</location>
        <location>Extracellular space</location>
        <location>Extracellular matrix</location>
        <location>Hyaline layer</location>
    </subcellularLocation>
    <subcellularLocation>
        <location>Secreted</location>
        <location>Extracellular space</location>
        <location>Extracellular matrix</location>
        <location>Apical lamina</location>
    </subcellularLocation>
    <text>In vesicles in the cytoplasm of unfertilized eggs, then to the base of the hyaline layer throughout development and finally in the apical lamina in late embryos and early larvae.</text>
</comment>
<comment type="alternative products">
    <event type="alternative splicing"/>
    <isoform>
        <id>P10079-1</id>
        <name>Ia</name>
        <sequence type="displayed"/>
    </isoform>
    <isoform>
        <id>P10079-2</id>
        <name>Ib</name>
        <sequence type="described" ref="VSP_000451"/>
    </isoform>
</comment>
<comment type="developmental stage">
    <text>Moderate levels in unfertilized eggs and during early cleavage, then rapidly increases in abundance between late morula and mesenchyme blastula stages to maximal levels maintained through subsequent stages. Expressed both maternally and zygotically.</text>
</comment>
<name>FBP1_STRPU</name>
<keyword id="KW-0025">Alternative splicing</keyword>
<keyword id="KW-0106">Calcium</keyword>
<keyword id="KW-0968">Cytoplasmic vesicle</keyword>
<keyword id="KW-1015">Disulfide bond</keyword>
<keyword id="KW-0245">EGF-like domain</keyword>
<keyword id="KW-0272">Extracellular matrix</keyword>
<keyword id="KW-0325">Glycoprotein</keyword>
<keyword id="KW-1185">Reference proteome</keyword>
<keyword id="KW-0677">Repeat</keyword>
<keyword id="KW-0964">Secreted</keyword>
<keyword id="KW-0732">Signal</keyword>
<proteinExistence type="evidence at protein level"/>
<protein>
    <recommendedName>
        <fullName>Fibropellin-1</fullName>
    </recommendedName>
    <alternativeName>
        <fullName>Epidermal growth factor-related protein 1</fullName>
    </alternativeName>
    <alternativeName>
        <fullName>Fibropellin-I</fullName>
    </alternativeName>
    <alternativeName>
        <fullName>SpEGF I</fullName>
    </alternativeName>
    <alternativeName>
        <fullName>UEGF-1</fullName>
    </alternativeName>
</protein>
<accession>P10079</accession>